<name>RRF_ECODH</name>
<evidence type="ECO:0000255" key="1">
    <source>
        <dbReference type="HAMAP-Rule" id="MF_00040"/>
    </source>
</evidence>
<protein>
    <recommendedName>
        <fullName evidence="1">Ribosome-recycling factor</fullName>
        <shortName evidence="1">RRF</shortName>
    </recommendedName>
    <alternativeName>
        <fullName evidence="1">Ribosome-releasing factor</fullName>
    </alternativeName>
</protein>
<gene>
    <name evidence="1" type="primary">frr</name>
    <name type="ordered locus">ECDH10B_0152</name>
</gene>
<keyword id="KW-0007">Acetylation</keyword>
<keyword id="KW-0963">Cytoplasm</keyword>
<keyword id="KW-0648">Protein biosynthesis</keyword>
<sequence>MISDIRKDAEVRMDKCVEAFKTQISKIRTGRASPSLLDGIVVEYYGTPTPLRQLASVTVEDSRTLKINVFDRSMSPAVEKAIMASDLGLNPNSAGSDIRVPLPPLTEERRKDLTKIVRGEAEQARVAVRNVRRDANDKVKALLKDKEISEDDDRRSQDDVQKLTDAAIKKIEAALADKEAELMQF</sequence>
<feature type="chain" id="PRO_1000090738" description="Ribosome-recycling factor">
    <location>
        <begin position="1"/>
        <end position="185"/>
    </location>
</feature>
<feature type="modified residue" description="N6-acetyllysine" evidence="1">
    <location>
        <position position="162"/>
    </location>
</feature>
<organism>
    <name type="scientific">Escherichia coli (strain K12 / DH10B)</name>
    <dbReference type="NCBI Taxonomy" id="316385"/>
    <lineage>
        <taxon>Bacteria</taxon>
        <taxon>Pseudomonadati</taxon>
        <taxon>Pseudomonadota</taxon>
        <taxon>Gammaproteobacteria</taxon>
        <taxon>Enterobacterales</taxon>
        <taxon>Enterobacteriaceae</taxon>
        <taxon>Escherichia</taxon>
    </lineage>
</organism>
<accession>B1XD41</accession>
<dbReference type="EMBL" id="CP000948">
    <property type="protein sequence ID" value="ACB01350.1"/>
    <property type="molecule type" value="Genomic_DNA"/>
</dbReference>
<dbReference type="RefSeq" id="WP_000622418.1">
    <property type="nucleotide sequence ID" value="NC_010473.1"/>
</dbReference>
<dbReference type="BMRB" id="B1XD41"/>
<dbReference type="SMR" id="B1XD41"/>
<dbReference type="GeneID" id="93777253"/>
<dbReference type="KEGG" id="ecd:ECDH10B_0152"/>
<dbReference type="HOGENOM" id="CLU_073981_2_1_6"/>
<dbReference type="GO" id="GO:0005829">
    <property type="term" value="C:cytosol"/>
    <property type="evidence" value="ECO:0007669"/>
    <property type="project" value="GOC"/>
</dbReference>
<dbReference type="GO" id="GO:0043023">
    <property type="term" value="F:ribosomal large subunit binding"/>
    <property type="evidence" value="ECO:0007669"/>
    <property type="project" value="TreeGrafter"/>
</dbReference>
<dbReference type="GO" id="GO:0002184">
    <property type="term" value="P:cytoplasmic translational termination"/>
    <property type="evidence" value="ECO:0007669"/>
    <property type="project" value="TreeGrafter"/>
</dbReference>
<dbReference type="CDD" id="cd00520">
    <property type="entry name" value="RRF"/>
    <property type="match status" value="1"/>
</dbReference>
<dbReference type="FunFam" id="1.10.132.20:FF:000001">
    <property type="entry name" value="Ribosome-recycling factor"/>
    <property type="match status" value="1"/>
</dbReference>
<dbReference type="FunFam" id="3.30.1360.40:FF:000001">
    <property type="entry name" value="Ribosome-recycling factor"/>
    <property type="match status" value="1"/>
</dbReference>
<dbReference type="Gene3D" id="3.30.1360.40">
    <property type="match status" value="1"/>
</dbReference>
<dbReference type="Gene3D" id="1.10.132.20">
    <property type="entry name" value="Ribosome-recycling factor"/>
    <property type="match status" value="1"/>
</dbReference>
<dbReference type="HAMAP" id="MF_00040">
    <property type="entry name" value="RRF"/>
    <property type="match status" value="1"/>
</dbReference>
<dbReference type="InterPro" id="IPR002661">
    <property type="entry name" value="Ribosome_recyc_fac"/>
</dbReference>
<dbReference type="InterPro" id="IPR023584">
    <property type="entry name" value="Ribosome_recyc_fac_dom"/>
</dbReference>
<dbReference type="InterPro" id="IPR036191">
    <property type="entry name" value="RRF_sf"/>
</dbReference>
<dbReference type="NCBIfam" id="TIGR00496">
    <property type="entry name" value="frr"/>
    <property type="match status" value="1"/>
</dbReference>
<dbReference type="PANTHER" id="PTHR20982:SF3">
    <property type="entry name" value="MITOCHONDRIAL RIBOSOME RECYCLING FACTOR PSEUDO 1"/>
    <property type="match status" value="1"/>
</dbReference>
<dbReference type="PANTHER" id="PTHR20982">
    <property type="entry name" value="RIBOSOME RECYCLING FACTOR"/>
    <property type="match status" value="1"/>
</dbReference>
<dbReference type="Pfam" id="PF01765">
    <property type="entry name" value="RRF"/>
    <property type="match status" value="1"/>
</dbReference>
<dbReference type="SUPFAM" id="SSF55194">
    <property type="entry name" value="Ribosome recycling factor, RRF"/>
    <property type="match status" value="1"/>
</dbReference>
<comment type="function">
    <text evidence="1">Responsible for the release of ribosomes from messenger RNA at the termination of protein biosynthesis. May increase the efficiency of translation by recycling ribosomes from one round of translation to another.</text>
</comment>
<comment type="subcellular location">
    <subcellularLocation>
        <location evidence="1">Cytoplasm</location>
    </subcellularLocation>
</comment>
<comment type="similarity">
    <text evidence="1">Belongs to the RRF family.</text>
</comment>
<reference key="1">
    <citation type="journal article" date="2008" name="J. Bacteriol.">
        <title>The complete genome sequence of Escherichia coli DH10B: insights into the biology of a laboratory workhorse.</title>
        <authorList>
            <person name="Durfee T."/>
            <person name="Nelson R."/>
            <person name="Baldwin S."/>
            <person name="Plunkett G. III"/>
            <person name="Burland V."/>
            <person name="Mau B."/>
            <person name="Petrosino J.F."/>
            <person name="Qin X."/>
            <person name="Muzny D.M."/>
            <person name="Ayele M."/>
            <person name="Gibbs R.A."/>
            <person name="Csorgo B."/>
            <person name="Posfai G."/>
            <person name="Weinstock G.M."/>
            <person name="Blattner F.R."/>
        </authorList>
    </citation>
    <scope>NUCLEOTIDE SEQUENCE [LARGE SCALE GENOMIC DNA]</scope>
    <source>
        <strain>K12 / DH10B</strain>
    </source>
</reference>
<proteinExistence type="inferred from homology"/>